<name>RUVC_CROS8</name>
<accession>A7MEA1</accession>
<dbReference type="EC" id="3.1.21.10" evidence="1"/>
<dbReference type="EMBL" id="CP000783">
    <property type="protein sequence ID" value="ABU76639.1"/>
    <property type="molecule type" value="Genomic_DNA"/>
</dbReference>
<dbReference type="RefSeq" id="WP_007900724.1">
    <property type="nucleotide sequence ID" value="NC_009778.1"/>
</dbReference>
<dbReference type="SMR" id="A7MEA1"/>
<dbReference type="GeneID" id="56730233"/>
<dbReference type="KEGG" id="esa:ESA_01379"/>
<dbReference type="HOGENOM" id="CLU_091257_2_1_6"/>
<dbReference type="Proteomes" id="UP000000260">
    <property type="component" value="Chromosome"/>
</dbReference>
<dbReference type="GO" id="GO:0005737">
    <property type="term" value="C:cytoplasm"/>
    <property type="evidence" value="ECO:0007669"/>
    <property type="project" value="UniProtKB-SubCell"/>
</dbReference>
<dbReference type="GO" id="GO:0048476">
    <property type="term" value="C:Holliday junction resolvase complex"/>
    <property type="evidence" value="ECO:0007669"/>
    <property type="project" value="UniProtKB-UniRule"/>
</dbReference>
<dbReference type="GO" id="GO:0008821">
    <property type="term" value="F:crossover junction DNA endonuclease activity"/>
    <property type="evidence" value="ECO:0007669"/>
    <property type="project" value="UniProtKB-UniRule"/>
</dbReference>
<dbReference type="GO" id="GO:0003677">
    <property type="term" value="F:DNA binding"/>
    <property type="evidence" value="ECO:0007669"/>
    <property type="project" value="UniProtKB-KW"/>
</dbReference>
<dbReference type="GO" id="GO:0000287">
    <property type="term" value="F:magnesium ion binding"/>
    <property type="evidence" value="ECO:0007669"/>
    <property type="project" value="UniProtKB-UniRule"/>
</dbReference>
<dbReference type="GO" id="GO:0006310">
    <property type="term" value="P:DNA recombination"/>
    <property type="evidence" value="ECO:0007669"/>
    <property type="project" value="UniProtKB-UniRule"/>
</dbReference>
<dbReference type="GO" id="GO:0006281">
    <property type="term" value="P:DNA repair"/>
    <property type="evidence" value="ECO:0007669"/>
    <property type="project" value="UniProtKB-UniRule"/>
</dbReference>
<dbReference type="CDD" id="cd16962">
    <property type="entry name" value="RuvC"/>
    <property type="match status" value="1"/>
</dbReference>
<dbReference type="FunFam" id="3.30.420.10:FF:000002">
    <property type="entry name" value="Crossover junction endodeoxyribonuclease RuvC"/>
    <property type="match status" value="1"/>
</dbReference>
<dbReference type="Gene3D" id="3.30.420.10">
    <property type="entry name" value="Ribonuclease H-like superfamily/Ribonuclease H"/>
    <property type="match status" value="1"/>
</dbReference>
<dbReference type="HAMAP" id="MF_00034">
    <property type="entry name" value="RuvC"/>
    <property type="match status" value="1"/>
</dbReference>
<dbReference type="InterPro" id="IPR012337">
    <property type="entry name" value="RNaseH-like_sf"/>
</dbReference>
<dbReference type="InterPro" id="IPR036397">
    <property type="entry name" value="RNaseH_sf"/>
</dbReference>
<dbReference type="InterPro" id="IPR020563">
    <property type="entry name" value="X-over_junc_endoDNase_Mg_BS"/>
</dbReference>
<dbReference type="InterPro" id="IPR002176">
    <property type="entry name" value="X-over_junc_endoDNase_RuvC"/>
</dbReference>
<dbReference type="NCBIfam" id="NF000711">
    <property type="entry name" value="PRK00039.2-1"/>
    <property type="match status" value="1"/>
</dbReference>
<dbReference type="NCBIfam" id="TIGR00228">
    <property type="entry name" value="ruvC"/>
    <property type="match status" value="1"/>
</dbReference>
<dbReference type="PANTHER" id="PTHR30194">
    <property type="entry name" value="CROSSOVER JUNCTION ENDODEOXYRIBONUCLEASE RUVC"/>
    <property type="match status" value="1"/>
</dbReference>
<dbReference type="PANTHER" id="PTHR30194:SF3">
    <property type="entry name" value="CROSSOVER JUNCTION ENDODEOXYRIBONUCLEASE RUVC"/>
    <property type="match status" value="1"/>
</dbReference>
<dbReference type="Pfam" id="PF02075">
    <property type="entry name" value="RuvC"/>
    <property type="match status" value="1"/>
</dbReference>
<dbReference type="PRINTS" id="PR00696">
    <property type="entry name" value="RSOLVASERUVC"/>
</dbReference>
<dbReference type="SUPFAM" id="SSF53098">
    <property type="entry name" value="Ribonuclease H-like"/>
    <property type="match status" value="1"/>
</dbReference>
<dbReference type="PROSITE" id="PS01321">
    <property type="entry name" value="RUVC"/>
    <property type="match status" value="1"/>
</dbReference>
<keyword id="KW-0963">Cytoplasm</keyword>
<keyword id="KW-0227">DNA damage</keyword>
<keyword id="KW-0233">DNA recombination</keyword>
<keyword id="KW-0234">DNA repair</keyword>
<keyword id="KW-0238">DNA-binding</keyword>
<keyword id="KW-0255">Endonuclease</keyword>
<keyword id="KW-0378">Hydrolase</keyword>
<keyword id="KW-0460">Magnesium</keyword>
<keyword id="KW-0479">Metal-binding</keyword>
<keyword id="KW-0540">Nuclease</keyword>
<keyword id="KW-1185">Reference proteome</keyword>
<protein>
    <recommendedName>
        <fullName evidence="1">Crossover junction endodeoxyribonuclease RuvC</fullName>
        <ecNumber evidence="1">3.1.21.10</ecNumber>
    </recommendedName>
    <alternativeName>
        <fullName evidence="1">Holliday junction nuclease RuvC</fullName>
    </alternativeName>
    <alternativeName>
        <fullName evidence="1">Holliday junction resolvase RuvC</fullName>
    </alternativeName>
</protein>
<evidence type="ECO:0000255" key="1">
    <source>
        <dbReference type="HAMAP-Rule" id="MF_00034"/>
    </source>
</evidence>
<organism>
    <name type="scientific">Cronobacter sakazakii (strain ATCC BAA-894)</name>
    <name type="common">Enterobacter sakazakii</name>
    <dbReference type="NCBI Taxonomy" id="290339"/>
    <lineage>
        <taxon>Bacteria</taxon>
        <taxon>Pseudomonadati</taxon>
        <taxon>Pseudomonadota</taxon>
        <taxon>Gammaproteobacteria</taxon>
        <taxon>Enterobacterales</taxon>
        <taxon>Enterobacteriaceae</taxon>
        <taxon>Cronobacter</taxon>
    </lineage>
</organism>
<gene>
    <name evidence="1" type="primary">ruvC</name>
    <name type="ordered locus">ESA_01379</name>
</gene>
<comment type="function">
    <text evidence="1">The RuvA-RuvB-RuvC complex processes Holliday junction (HJ) DNA during genetic recombination and DNA repair. Endonuclease that resolves HJ intermediates. Cleaves cruciform DNA by making single-stranded nicks across the HJ at symmetrical positions within the homologous arms, yielding a 5'-phosphate and a 3'-hydroxyl group; requires a central core of homology in the junction. The consensus cleavage sequence is 5'-(A/T)TT(C/G)-3'. Cleavage occurs on the 3'-side of the TT dinucleotide at the point of strand exchange. HJ branch migration catalyzed by RuvA-RuvB allows RuvC to scan DNA until it finds its consensus sequence, where it cleaves and resolves the cruciform DNA.</text>
</comment>
<comment type="catalytic activity">
    <reaction evidence="1">
        <text>Endonucleolytic cleavage at a junction such as a reciprocal single-stranded crossover between two homologous DNA duplexes (Holliday junction).</text>
        <dbReference type="EC" id="3.1.21.10"/>
    </reaction>
</comment>
<comment type="cofactor">
    <cofactor evidence="1">
        <name>Mg(2+)</name>
        <dbReference type="ChEBI" id="CHEBI:18420"/>
    </cofactor>
    <text evidence="1">Binds 2 Mg(2+) ion per subunit.</text>
</comment>
<comment type="subunit">
    <text evidence="1">Homodimer which binds Holliday junction (HJ) DNA. The HJ becomes 2-fold symmetrical on binding to RuvC with unstacked arms; it has a different conformation from HJ DNA in complex with RuvA. In the full resolvosome a probable DNA-RuvA(4)-RuvB(12)-RuvC(2) complex forms which resolves the HJ.</text>
</comment>
<comment type="subcellular location">
    <subcellularLocation>
        <location evidence="1">Cytoplasm</location>
    </subcellularLocation>
</comment>
<comment type="similarity">
    <text evidence="1">Belongs to the RuvC family.</text>
</comment>
<reference key="1">
    <citation type="journal article" date="2010" name="PLoS ONE">
        <title>Genome sequence of Cronobacter sakazakii BAA-894 and comparative genomic hybridization analysis with other Cronobacter species.</title>
        <authorList>
            <person name="Kucerova E."/>
            <person name="Clifton S.W."/>
            <person name="Xia X.Q."/>
            <person name="Long F."/>
            <person name="Porwollik S."/>
            <person name="Fulton L."/>
            <person name="Fronick C."/>
            <person name="Minx P."/>
            <person name="Kyung K."/>
            <person name="Warren W."/>
            <person name="Fulton R."/>
            <person name="Feng D."/>
            <person name="Wollam A."/>
            <person name="Shah N."/>
            <person name="Bhonagiri V."/>
            <person name="Nash W.E."/>
            <person name="Hallsworth-Pepin K."/>
            <person name="Wilson R.K."/>
            <person name="McClelland M."/>
            <person name="Forsythe S.J."/>
        </authorList>
    </citation>
    <scope>NUCLEOTIDE SEQUENCE [LARGE SCALE GENOMIC DNA]</scope>
    <source>
        <strain>ATCC BAA-894</strain>
    </source>
</reference>
<feature type="chain" id="PRO_1000002753" description="Crossover junction endodeoxyribonuclease RuvC">
    <location>
        <begin position="1"/>
        <end position="173"/>
    </location>
</feature>
<feature type="active site" evidence="1">
    <location>
        <position position="8"/>
    </location>
</feature>
<feature type="active site" evidence="1">
    <location>
        <position position="67"/>
    </location>
</feature>
<feature type="active site" evidence="1">
    <location>
        <position position="139"/>
    </location>
</feature>
<feature type="binding site" evidence="1">
    <location>
        <position position="8"/>
    </location>
    <ligand>
        <name>Mg(2+)</name>
        <dbReference type="ChEBI" id="CHEBI:18420"/>
        <label>1</label>
    </ligand>
</feature>
<feature type="binding site" evidence="1">
    <location>
        <position position="67"/>
    </location>
    <ligand>
        <name>Mg(2+)</name>
        <dbReference type="ChEBI" id="CHEBI:18420"/>
        <label>2</label>
    </ligand>
</feature>
<feature type="binding site" evidence="1">
    <location>
        <position position="139"/>
    </location>
    <ligand>
        <name>Mg(2+)</name>
        <dbReference type="ChEBI" id="CHEBI:18420"/>
        <label>1</label>
    </ligand>
</feature>
<sequence>MSIILGIDPGSRVTGYGVIRQTGRQLTYLGSGCIRTSVTDLPSRLKLIYAGVSEIITQFRPDYFAIEQVFMAKNADSALKLGQARGAAIVAAVNHDLPVFEYAARQVKQTVVGIGSAEKSQVQHMVRTLLKLSANPQADAADALAIAITHCHVSQNATQVSESRLNLARGRLR</sequence>
<proteinExistence type="inferred from homology"/>